<dbReference type="EMBL" id="CM002240">
    <property type="protein sequence ID" value="EAA32383.1"/>
    <property type="molecule type" value="Genomic_DNA"/>
</dbReference>
<dbReference type="RefSeq" id="XP_961619.1">
    <property type="nucleotide sequence ID" value="XM_956526.2"/>
</dbReference>
<dbReference type="PDB" id="6YW5">
    <property type="method" value="EM"/>
    <property type="resolution" value="2.85 A"/>
    <property type="chains" value="RR=1-256"/>
</dbReference>
<dbReference type="PDB" id="6YWX">
    <property type="method" value="EM"/>
    <property type="resolution" value="3.10 A"/>
    <property type="chains" value="RR=1-256"/>
</dbReference>
<dbReference type="PDBsum" id="6YW5"/>
<dbReference type="PDBsum" id="6YWX"/>
<dbReference type="EMDB" id="EMD-10958"/>
<dbReference type="EMDB" id="EMD-10978"/>
<dbReference type="SMR" id="Q1K8E0"/>
<dbReference type="STRING" id="367110.Q1K8E0"/>
<dbReference type="PaxDb" id="5141-EFNCRP00000004425"/>
<dbReference type="EnsemblFungi" id="EAA32383">
    <property type="protein sequence ID" value="EAA32383"/>
    <property type="gene ID" value="NCU01007"/>
</dbReference>
<dbReference type="GeneID" id="3877826"/>
<dbReference type="KEGG" id="ncr:NCU01007"/>
<dbReference type="VEuPathDB" id="FungiDB:NCU01007"/>
<dbReference type="HOGENOM" id="CLU_082177_0_0_1"/>
<dbReference type="InParanoid" id="Q1K8E0"/>
<dbReference type="OMA" id="QYKSDMF"/>
<dbReference type="OrthoDB" id="21463at2759"/>
<dbReference type="Proteomes" id="UP000001805">
    <property type="component" value="Chromosome 2, Linkage Group V"/>
</dbReference>
<dbReference type="GO" id="GO:0005763">
    <property type="term" value="C:mitochondrial small ribosomal subunit"/>
    <property type="evidence" value="ECO:0000318"/>
    <property type="project" value="GO_Central"/>
</dbReference>
<dbReference type="GO" id="GO:0070181">
    <property type="term" value="F:small ribosomal subunit rRNA binding"/>
    <property type="evidence" value="ECO:0000318"/>
    <property type="project" value="GO_Central"/>
</dbReference>
<dbReference type="GO" id="GO:0003735">
    <property type="term" value="F:structural constituent of ribosome"/>
    <property type="evidence" value="ECO:0000318"/>
    <property type="project" value="GO_Central"/>
</dbReference>
<dbReference type="GO" id="GO:0006412">
    <property type="term" value="P:translation"/>
    <property type="evidence" value="ECO:0000318"/>
    <property type="project" value="GO_Central"/>
</dbReference>
<dbReference type="FunFam" id="4.10.640.10:FF:000013">
    <property type="entry name" value="37S ribosomal protein S18"/>
    <property type="match status" value="1"/>
</dbReference>
<dbReference type="Gene3D" id="4.10.640.10">
    <property type="entry name" value="Ribosomal protein S18"/>
    <property type="match status" value="1"/>
</dbReference>
<dbReference type="InterPro" id="IPR001648">
    <property type="entry name" value="Ribosomal_bS18"/>
</dbReference>
<dbReference type="InterPro" id="IPR036870">
    <property type="entry name" value="Ribosomal_bS18_sf"/>
</dbReference>
<dbReference type="PANTHER" id="PTHR13479">
    <property type="entry name" value="30S RIBOSOMAL PROTEIN S18"/>
    <property type="match status" value="1"/>
</dbReference>
<dbReference type="PANTHER" id="PTHR13479:SF40">
    <property type="entry name" value="SMALL RIBOSOMAL SUBUNIT PROTEIN BS18M"/>
    <property type="match status" value="1"/>
</dbReference>
<dbReference type="Pfam" id="PF01084">
    <property type="entry name" value="Ribosomal_S18"/>
    <property type="match status" value="1"/>
</dbReference>
<dbReference type="SUPFAM" id="SSF46911">
    <property type="entry name" value="Ribosomal protein S18"/>
    <property type="match status" value="1"/>
</dbReference>
<reference key="1">
    <citation type="journal article" date="2003" name="Nature">
        <title>The genome sequence of the filamentous fungus Neurospora crassa.</title>
        <authorList>
            <person name="Galagan J.E."/>
            <person name="Calvo S.E."/>
            <person name="Borkovich K.A."/>
            <person name="Selker E.U."/>
            <person name="Read N.D."/>
            <person name="Jaffe D.B."/>
            <person name="FitzHugh W."/>
            <person name="Ma L.-J."/>
            <person name="Smirnov S."/>
            <person name="Purcell S."/>
            <person name="Rehman B."/>
            <person name="Elkins T."/>
            <person name="Engels R."/>
            <person name="Wang S."/>
            <person name="Nielsen C.B."/>
            <person name="Butler J."/>
            <person name="Endrizzi M."/>
            <person name="Qui D."/>
            <person name="Ianakiev P."/>
            <person name="Bell-Pedersen D."/>
            <person name="Nelson M.A."/>
            <person name="Werner-Washburne M."/>
            <person name="Selitrennikoff C.P."/>
            <person name="Kinsey J.A."/>
            <person name="Braun E.L."/>
            <person name="Zelter A."/>
            <person name="Schulte U."/>
            <person name="Kothe G.O."/>
            <person name="Jedd G."/>
            <person name="Mewes H.-W."/>
            <person name="Staben C."/>
            <person name="Marcotte E."/>
            <person name="Greenberg D."/>
            <person name="Roy A."/>
            <person name="Foley K."/>
            <person name="Naylor J."/>
            <person name="Stange-Thomann N."/>
            <person name="Barrett R."/>
            <person name="Gnerre S."/>
            <person name="Kamal M."/>
            <person name="Kamvysselis M."/>
            <person name="Mauceli E.W."/>
            <person name="Bielke C."/>
            <person name="Rudd S."/>
            <person name="Frishman D."/>
            <person name="Krystofova S."/>
            <person name="Rasmussen C."/>
            <person name="Metzenberg R.L."/>
            <person name="Perkins D.D."/>
            <person name="Kroken S."/>
            <person name="Cogoni C."/>
            <person name="Macino G."/>
            <person name="Catcheside D.E.A."/>
            <person name="Li W."/>
            <person name="Pratt R.J."/>
            <person name="Osmani S.A."/>
            <person name="DeSouza C.P.C."/>
            <person name="Glass N.L."/>
            <person name="Orbach M.J."/>
            <person name="Berglund J.A."/>
            <person name="Voelker R."/>
            <person name="Yarden O."/>
            <person name="Plamann M."/>
            <person name="Seiler S."/>
            <person name="Dunlap J.C."/>
            <person name="Radford A."/>
            <person name="Aramayo R."/>
            <person name="Natvig D.O."/>
            <person name="Alex L.A."/>
            <person name="Mannhaupt G."/>
            <person name="Ebbole D.J."/>
            <person name="Freitag M."/>
            <person name="Paulsen I."/>
            <person name="Sachs M.S."/>
            <person name="Lander E.S."/>
            <person name="Nusbaum C."/>
            <person name="Birren B.W."/>
        </authorList>
    </citation>
    <scope>NUCLEOTIDE SEQUENCE [LARGE SCALE GENOMIC DNA]</scope>
    <source>
        <strain>ATCC 24698 / 74-OR23-1A / CBS 708.71 / DSM 1257 / FGSC 987</strain>
    </source>
</reference>
<reference evidence="6 7" key="2">
    <citation type="journal article" date="2020" name="Nat. Commun.">
        <title>Analysis of translating mitoribosome reveals functional characteristics of translation in mitochondria of fungi.</title>
        <authorList>
            <person name="Itoh Y."/>
            <person name="Naschberger A."/>
            <person name="Mortezaei N."/>
            <person name="Herrmann J.M."/>
            <person name="Amunts A."/>
        </authorList>
    </citation>
    <scope>STRUCTURE BY ELECTRON MICROSCOPY (2.85 ANGSTROMS)</scope>
</reference>
<keyword id="KW-0002">3D-structure</keyword>
<keyword id="KW-0496">Mitochondrion</keyword>
<keyword id="KW-1185">Reference proteome</keyword>
<keyword id="KW-0687">Ribonucleoprotein</keyword>
<keyword id="KW-0689">Ribosomal protein</keyword>
<name>RSM18_NEUCR</name>
<feature type="chain" id="PRO_0000458580" description="Small ribosomal subunit protein bS18m">
    <location>
        <begin position="1"/>
        <end position="256"/>
    </location>
</feature>
<feature type="region of interest" description="Disordered" evidence="1">
    <location>
        <begin position="19"/>
        <end position="106"/>
    </location>
</feature>
<feature type="compositionally biased region" description="Polar residues" evidence="1">
    <location>
        <begin position="21"/>
        <end position="30"/>
    </location>
</feature>
<feature type="compositionally biased region" description="Low complexity" evidence="1">
    <location>
        <begin position="44"/>
        <end position="66"/>
    </location>
</feature>
<protein>
    <recommendedName>
        <fullName evidence="3">Small ribosomal subunit protein bS18m</fullName>
    </recommendedName>
</protein>
<sequence length="256" mass="28428">MSSSRQFLSSALRQCRAAGQRTAQFSTTSPAAAIRDIPTTSFQNAPRTNTNTSSPSSNNNNNAGSSQYKSDMFNLLNSGAGSRGGRDSYNNARDVDGGQRYGSNSQKVQELLQSEVTSNNYMRMMRRRWNNGDVYAPRDLSPYEMKGRNGGWVEAADVVDELGFSPLDNYRNFSLISDYITPFGRIRHSKETGLKPVNQRKIAKMVRRAIGLGIHPSVHKHPEILKNSNGRHLLPLVVPKGQKANKTKNFDGEDEN</sequence>
<comment type="function">
    <text evidence="5">Component of the mitochondrial ribosome (mitoribosome), a dedicated translation machinery responsible for the synthesis of mitochondrial genome-encoded proteins, including at least some of the essential transmembrane subunits of the mitochondrial respiratory chain. The mitoribosomes are attached to the mitochondrial inner membrane and translation products are cotranslationally integrated into the membrane.</text>
</comment>
<comment type="subunit">
    <text evidence="2">Component of the mitochondrial small ribosomal subunit (mt-SSU). Mature N.crassa 74S mitochondrial ribosomes consist of a small (37S) and a large (54S) subunit. The 37S small subunit contains a 16S ribosomal RNA (16S mt-rRNA) and 32 different proteins. The 54S large subunit contains a 23S rRNA (23S mt-rRNA) and 42 different proteins.</text>
</comment>
<comment type="subcellular location">
    <subcellularLocation>
        <location evidence="2">Mitochondrion</location>
    </subcellularLocation>
</comment>
<comment type="similarity">
    <text evidence="4">Belongs to the bacterial ribosomal protein bS18 family.</text>
</comment>
<accession>Q1K8E0</accession>
<proteinExistence type="evidence at protein level"/>
<evidence type="ECO:0000256" key="1">
    <source>
        <dbReference type="SAM" id="MobiDB-lite"/>
    </source>
</evidence>
<evidence type="ECO:0000269" key="2">
    <source>
    </source>
</evidence>
<evidence type="ECO:0000303" key="3">
    <source>
    </source>
</evidence>
<evidence type="ECO:0000305" key="4"/>
<evidence type="ECO:0000305" key="5">
    <source>
    </source>
</evidence>
<evidence type="ECO:0007744" key="6">
    <source>
        <dbReference type="PDB" id="6YW5"/>
    </source>
</evidence>
<evidence type="ECO:0007744" key="7">
    <source>
        <dbReference type="PDB" id="6YWX"/>
    </source>
</evidence>
<organism>
    <name type="scientific">Neurospora crassa (strain ATCC 24698 / 74-OR23-1A / CBS 708.71 / DSM 1257 / FGSC 987)</name>
    <dbReference type="NCBI Taxonomy" id="367110"/>
    <lineage>
        <taxon>Eukaryota</taxon>
        <taxon>Fungi</taxon>
        <taxon>Dikarya</taxon>
        <taxon>Ascomycota</taxon>
        <taxon>Pezizomycotina</taxon>
        <taxon>Sordariomycetes</taxon>
        <taxon>Sordariomycetidae</taxon>
        <taxon>Sordariales</taxon>
        <taxon>Sordariaceae</taxon>
        <taxon>Neurospora</taxon>
    </lineage>
</organism>
<gene>
    <name type="primary">rsm18</name>
    <name type="ORF">NCU01007</name>
</gene>